<gene>
    <name type="primary">hopAD1</name>
    <name type="synonym">holPtoI</name>
    <name type="synonym">hopPtoS</name>
    <name type="ordered locus">PSPTO_4691</name>
</gene>
<reference key="1">
    <citation type="journal article" date="2003" name="Proc. Natl. Acad. Sci. U.S.A.">
        <title>The complete genome sequence of the Arabidopsis and tomato pathogen Pseudomonas syringae pv. tomato DC3000.</title>
        <authorList>
            <person name="Buell C.R."/>
            <person name="Joardar V."/>
            <person name="Lindeberg M."/>
            <person name="Selengut J."/>
            <person name="Paulsen I.T."/>
            <person name="Gwinn M.L."/>
            <person name="Dodson R.J."/>
            <person name="DeBoy R.T."/>
            <person name="Durkin A.S."/>
            <person name="Kolonay J.F."/>
            <person name="Madupu R."/>
            <person name="Daugherty S.C."/>
            <person name="Brinkac L.M."/>
            <person name="Beanan M.J."/>
            <person name="Haft D.H."/>
            <person name="Nelson W.C."/>
            <person name="Davidsen T.M."/>
            <person name="Zafar N."/>
            <person name="Zhou L."/>
            <person name="Liu J."/>
            <person name="Yuan Q."/>
            <person name="Khouri H.M."/>
            <person name="Fedorova N.B."/>
            <person name="Tran B."/>
            <person name="Russell D."/>
            <person name="Berry K.J."/>
            <person name="Utterback T.R."/>
            <person name="Van Aken S.E."/>
            <person name="Feldblyum T.V."/>
            <person name="D'Ascenzo M."/>
            <person name="Deng W.-L."/>
            <person name="Ramos A.R."/>
            <person name="Alfano J.R."/>
            <person name="Cartinhour S."/>
            <person name="Chatterjee A.K."/>
            <person name="Delaney T.P."/>
            <person name="Lazarowitz S.G."/>
            <person name="Martin G.B."/>
            <person name="Schneider D.J."/>
            <person name="Tang X."/>
            <person name="Bender C.L."/>
            <person name="White O."/>
            <person name="Fraser C.M."/>
            <person name="Collmer A."/>
        </authorList>
    </citation>
    <scope>NUCLEOTIDE SEQUENCE [LARGE SCALE GENOMIC DNA]</scope>
    <source>
        <strain>ATCC BAA-871 / DC3000</strain>
    </source>
</reference>
<reference key="2">
    <citation type="journal article" date="2002" name="Science">
        <title>A functional screen for the type III (Hrp) secretome of the plant pathogen Pseudomonas syringae.</title>
        <authorList>
            <person name="Guttman D.S."/>
            <person name="Vinatzer B.A."/>
            <person name="Sarkar S.F."/>
            <person name="Ranall M.V."/>
            <person name="Kettler G."/>
            <person name="Greenberg J.T."/>
        </authorList>
    </citation>
    <scope>NUCLEOTIDE SEQUENCE [GENOMIC DNA] OF 1-106</scope>
    <source>
        <strain>ATCC BAA-871 / DC3000</strain>
    </source>
</reference>
<reference key="3">
    <citation type="journal article" date="2002" name="Proc. Natl. Acad. Sci. U.S.A.">
        <title>Genomewide identification of proteins secreted by the Hrp type III protein secretion system of Pseudomonas syringae pv. tomato DC3000.</title>
        <authorList>
            <person name="Petnicki-Ocwieja T."/>
            <person name="Schneider D.J."/>
            <person name="Tam V.C."/>
            <person name="Chancey S.T."/>
            <person name="Shan L."/>
            <person name="Jamir Y."/>
            <person name="Schechter L.M."/>
            <person name="Janes M.D."/>
            <person name="Buell C.R."/>
            <person name="Tang X."/>
            <person name="Collmer A."/>
            <person name="Alfano J.R."/>
        </authorList>
    </citation>
    <scope>SUBCELLULAR LOCATION</scope>
    <source>
        <strain>ATCC BAA-871 / DC3000</strain>
    </source>
</reference>
<feature type="chain" id="PRO_0000238698" description="Effector protein hopAD1">
    <location>
        <begin position="1"/>
        <end position="632"/>
    </location>
</feature>
<feature type="region of interest" description="Disordered" evidence="1">
    <location>
        <begin position="13"/>
        <end position="34"/>
    </location>
</feature>
<feature type="compositionally biased region" description="Polar residues" evidence="1">
    <location>
        <begin position="15"/>
        <end position="32"/>
    </location>
</feature>
<dbReference type="EMBL" id="AE016853">
    <property type="protein sequence ID" value="AAO58135.1"/>
    <property type="molecule type" value="Genomic_DNA"/>
</dbReference>
<dbReference type="EMBL" id="AF458398">
    <property type="protein sequence ID" value="AAL84262.1"/>
    <property type="molecule type" value="Genomic_DNA"/>
</dbReference>
<dbReference type="RefSeq" id="NP_794440.1">
    <property type="nucleotide sequence ID" value="NC_004578.1"/>
</dbReference>
<dbReference type="RefSeq" id="WP_011105124.1">
    <property type="nucleotide sequence ID" value="NC_004578.1"/>
</dbReference>
<dbReference type="STRING" id="223283.PSPTO_4691"/>
<dbReference type="GeneID" id="1186374"/>
<dbReference type="KEGG" id="pst:PSPTO_4691"/>
<dbReference type="PATRIC" id="fig|223283.9.peg.4806"/>
<dbReference type="eggNOG" id="COG3486">
    <property type="taxonomic scope" value="Bacteria"/>
</dbReference>
<dbReference type="HOGENOM" id="CLU_432677_0_0_6"/>
<dbReference type="OrthoDB" id="6989660at2"/>
<dbReference type="Proteomes" id="UP000002515">
    <property type="component" value="Chromosome"/>
</dbReference>
<dbReference type="GO" id="GO:0005576">
    <property type="term" value="C:extracellular region"/>
    <property type="evidence" value="ECO:0007669"/>
    <property type="project" value="UniProtKB-SubCell"/>
</dbReference>
<dbReference type="InterPro" id="IPR036188">
    <property type="entry name" value="FAD/NAD-bd_sf"/>
</dbReference>
<dbReference type="SUPFAM" id="SSF51905">
    <property type="entry name" value="FAD/NAD(P)-binding domain"/>
    <property type="match status" value="1"/>
</dbReference>
<name>HOPAD_PSESM</name>
<sequence>MLIGHSLHHMRPTAVDSSLPTSATSQTISNTKSRLDPHRVRELTFIGVGSSVAYLLNELNGRFADSGVTTPFLGKVSIVGKDDSWAENVRGKGYINHQTEIISQWDQQVPKYDPNYAARAEFSASNRRQLTRTVELGAEHLKAQVTGISRLDDGCFRINLDNGQILQSRQIVLGTGAGPHTSIWNSVTSHTQAEKRLDNIKLHEQKALRGKVLDLDEFMRASDASPQTFAGKTVVIHGPNAGIDAAERAGELGANAVWFTRSTNPVLLDGNQLKFAPELAKSAIHKVDKLDIRPTKLENGFALRLHYSSLGQDSREPKKVLDADYYVYAMGQDIHKPGSAAAILGSLLDHLEPIYDYDQVYSDQPFKTVIGLQSRGSNSDNGLIIVGAAVAQLATNVQHSYKDHALDRILEEMTRLPEKQTEKLSQMLLEGAPSVQIQTYLKTWQLDSGQPPDKQVLQNQVENYLAARDYFQRQTNEQKGNLDGVAAEVKNQTLTEVASVIVSPQLGTIKASAAALSGLMPAYVANGENNFTTDNRTMLRAGIAARYPNIGNAEASAFIDEVVTLRHLNSQRFIEKVAGEMMDKGAQPLVSLRPPVLGVPASVRTAYEAYLHALNSGAHDGTPLSQRWLPKK</sequence>
<comment type="subcellular location">
    <subcellularLocation>
        <location evidence="2">Secreted</location>
    </subcellularLocation>
    <text>Secreted via type III secretion system (T3SS).</text>
</comment>
<protein>
    <recommendedName>
        <fullName>Effector protein hopAD1</fullName>
    </recommendedName>
    <alternativeName>
        <fullName>Hrp-dependent outer protein I</fullName>
    </alternativeName>
</protein>
<keyword id="KW-1185">Reference proteome</keyword>
<keyword id="KW-0964">Secreted</keyword>
<evidence type="ECO:0000256" key="1">
    <source>
        <dbReference type="SAM" id="MobiDB-lite"/>
    </source>
</evidence>
<evidence type="ECO:0000269" key="2">
    <source>
    </source>
</evidence>
<accession>Q87W65</accession>
<accession>Q8RNZ5</accession>
<organism>
    <name type="scientific">Pseudomonas syringae pv. tomato (strain ATCC BAA-871 / DC3000)</name>
    <dbReference type="NCBI Taxonomy" id="223283"/>
    <lineage>
        <taxon>Bacteria</taxon>
        <taxon>Pseudomonadati</taxon>
        <taxon>Pseudomonadota</taxon>
        <taxon>Gammaproteobacteria</taxon>
        <taxon>Pseudomonadales</taxon>
        <taxon>Pseudomonadaceae</taxon>
        <taxon>Pseudomonas</taxon>
    </lineage>
</organism>
<proteinExistence type="predicted"/>